<proteinExistence type="evidence at protein level"/>
<sequence>SGSNLTTV</sequence>
<feature type="chain" id="PRO_0000314067" description="Pregnancy-associated glycoprotein 50I">
    <location>
        <begin position="1"/>
        <end position="8" status="greater than"/>
    </location>
</feature>
<feature type="glycosylation site" description="N-linked (GlcNAc...) asparagine" evidence="2">
    <location>
        <position position="4"/>
    </location>
</feature>
<feature type="non-terminal residue" evidence="3">
    <location>
        <position position="8"/>
    </location>
</feature>
<comment type="subcellular location">
    <subcellularLocation>
        <location evidence="4">Secreted</location>
        <location evidence="4">Extracellular space</location>
    </subcellularLocation>
</comment>
<comment type="tissue specificity">
    <text evidence="2">Chorionic epithelium (trophectoderm) and placental cotyledons.</text>
</comment>
<comment type="developmental stage">
    <text evidence="2">Expressed at 120 dpc.</text>
</comment>
<comment type="miscellaneous">
    <text evidence="2">On the 2D-gel the determined pI of this protein is: 5.4, its MW is: 50 kDa.</text>
</comment>
<comment type="similarity">
    <text evidence="1">Belongs to the peptidase A1 family.</text>
</comment>
<reference key="1">
    <citation type="journal article" date="2009" name="Anim. Reprod. Sci.">
        <title>Identification of multiple pregnancy-associated glycoproteins (PAGs) purified from the European bison (Eb; Bison bonasus L.) placentas.</title>
        <authorList>
            <person name="Kiewisz J."/>
            <person name="Melo de Sousa N."/>
            <person name="Beckers J.-F.M.P."/>
            <person name="Panasiewicz G."/>
            <person name="Gizejewski Z."/>
            <person name="Szafranska B."/>
        </authorList>
    </citation>
    <scope>PROTEIN SEQUENCE</scope>
    <scope>TISSUE SPECIFICITY</scope>
    <scope>DEVELOPMENTAL STAGE</scope>
    <scope>GLYCOSYLATION AT ASN-4</scope>
    <source>
        <tissue>Placenta</tissue>
    </source>
</reference>
<keyword id="KW-0064">Aspartyl protease</keyword>
<keyword id="KW-0903">Direct protein sequencing</keyword>
<keyword id="KW-0325">Glycoprotein</keyword>
<keyword id="KW-0378">Hydrolase</keyword>
<keyword id="KW-0645">Protease</keyword>
<keyword id="KW-0964">Secreted</keyword>
<name>PA50I_BISBO</name>
<organism>
    <name type="scientific">Bison bonasus</name>
    <name type="common">European bison</name>
    <dbReference type="NCBI Taxonomy" id="9902"/>
    <lineage>
        <taxon>Eukaryota</taxon>
        <taxon>Metazoa</taxon>
        <taxon>Chordata</taxon>
        <taxon>Craniata</taxon>
        <taxon>Vertebrata</taxon>
        <taxon>Euteleostomi</taxon>
        <taxon>Mammalia</taxon>
        <taxon>Eutheria</taxon>
        <taxon>Laurasiatheria</taxon>
        <taxon>Artiodactyla</taxon>
        <taxon>Ruminantia</taxon>
        <taxon>Pecora</taxon>
        <taxon>Bovidae</taxon>
        <taxon>Bovinae</taxon>
        <taxon>Bison</taxon>
    </lineage>
</organism>
<dbReference type="EC" id="3.4.23.-"/>
<dbReference type="iPTMnet" id="P85327"/>
<dbReference type="GO" id="GO:0005576">
    <property type="term" value="C:extracellular region"/>
    <property type="evidence" value="ECO:0007669"/>
    <property type="project" value="UniProtKB-SubCell"/>
</dbReference>
<dbReference type="GO" id="GO:0004190">
    <property type="term" value="F:aspartic-type endopeptidase activity"/>
    <property type="evidence" value="ECO:0007669"/>
    <property type="project" value="UniProtKB-KW"/>
</dbReference>
<dbReference type="GO" id="GO:0006508">
    <property type="term" value="P:proteolysis"/>
    <property type="evidence" value="ECO:0007669"/>
    <property type="project" value="UniProtKB-KW"/>
</dbReference>
<protein>
    <recommendedName>
        <fullName>Pregnancy-associated glycoprotein 50I</fullName>
        <ecNumber>3.4.23.-</ecNumber>
    </recommendedName>
    <alternativeName>
        <fullName>EbPAG-I 50 kDa</fullName>
    </alternativeName>
</protein>
<accession>P85327</accession>
<evidence type="ECO:0000255" key="1"/>
<evidence type="ECO:0000269" key="2">
    <source>
    </source>
</evidence>
<evidence type="ECO:0000303" key="3">
    <source>
    </source>
</evidence>
<evidence type="ECO:0000305" key="4"/>